<keyword id="KW-0012">Acyltransferase</keyword>
<keyword id="KW-0046">Antibiotic resistance</keyword>
<keyword id="KW-0614">Plasmid</keyword>
<keyword id="KW-0808">Transferase</keyword>
<gene>
    <name evidence="3" type="primary">holE</name>
</gene>
<name>HOLE_PSEX7</name>
<sequence>MSEKLDSYKLMQEHQTWTSKPASLEEWQIVNEWAIAEKWDLGLGDTERFFNIDEEGFYLGYVNDEPVASVSVVNYTDEYAYAGFYLVAPGARGKGYGLRLSYDAFRHCDKRSVGLDGMPEQEENYKKGGFVTHYETSRLVGIHNQQVDAPDGVQNITADNIDEVIKFDEKITGYPRAALLKDWFSGEGRHGFVINSGDGVIGVVGIRRSTDGYRLGPLYSENQAVCDKLFAMALAQVPQGTQVTIDAPTLDLGFINGLKKMGFEEIFHTFRMYRGKEPQGEKHKIQAIASLELG</sequence>
<proteinExistence type="evidence at protein level"/>
<dbReference type="EC" id="2.3.1.-" evidence="1"/>
<dbReference type="EMBL" id="FN689524">
    <property type="protein sequence ID" value="CBK62750.1"/>
    <property type="molecule type" value="Genomic_DNA"/>
</dbReference>
<dbReference type="RefSeq" id="WP_013933302.1">
    <property type="nucleotide sequence ID" value="NC_015708.1"/>
</dbReference>
<dbReference type="RefSeq" id="YP_004661191.1">
    <property type="nucleotide sequence ID" value="NC_015708.1"/>
</dbReference>
<dbReference type="SMR" id="F8J3H2"/>
<dbReference type="BioCyc" id="MetaCyc:MONOMER-19801"/>
<dbReference type="GO" id="GO:0016747">
    <property type="term" value="F:acyltransferase activity, transferring groups other than amino-acyl groups"/>
    <property type="evidence" value="ECO:0007669"/>
    <property type="project" value="InterPro"/>
</dbReference>
<dbReference type="GO" id="GO:0046677">
    <property type="term" value="P:response to antibiotic"/>
    <property type="evidence" value="ECO:0007669"/>
    <property type="project" value="UniProtKB-KW"/>
</dbReference>
<dbReference type="CDD" id="cd04301">
    <property type="entry name" value="NAT_SF"/>
    <property type="match status" value="1"/>
</dbReference>
<dbReference type="Gene3D" id="3.40.630.30">
    <property type="match status" value="1"/>
</dbReference>
<dbReference type="Gene3D" id="3.40.630.90">
    <property type="match status" value="1"/>
</dbReference>
<dbReference type="InterPro" id="IPR052729">
    <property type="entry name" value="Acyl/Acetyltrans_Enzymes"/>
</dbReference>
<dbReference type="InterPro" id="IPR016181">
    <property type="entry name" value="Acyl_CoA_acyltransferase"/>
</dbReference>
<dbReference type="InterPro" id="IPR000182">
    <property type="entry name" value="GNAT_dom"/>
</dbReference>
<dbReference type="InterPro" id="IPR041496">
    <property type="entry name" value="YitH/HolE_GNAT"/>
</dbReference>
<dbReference type="PANTHER" id="PTHR47237">
    <property type="entry name" value="SLL0310 PROTEIN"/>
    <property type="match status" value="1"/>
</dbReference>
<dbReference type="PANTHER" id="PTHR47237:SF1">
    <property type="entry name" value="SLL0310 PROTEIN"/>
    <property type="match status" value="1"/>
</dbReference>
<dbReference type="Pfam" id="PF00583">
    <property type="entry name" value="Acetyltransf_1"/>
    <property type="match status" value="1"/>
</dbReference>
<dbReference type="Pfam" id="PF18014">
    <property type="entry name" value="Acetyltransf_18"/>
    <property type="match status" value="1"/>
</dbReference>
<dbReference type="SUPFAM" id="SSF55729">
    <property type="entry name" value="Acyl-CoA N-acyltransferases (Nat)"/>
    <property type="match status" value="1"/>
</dbReference>
<dbReference type="PROSITE" id="PS51186">
    <property type="entry name" value="GNAT"/>
    <property type="match status" value="1"/>
</dbReference>
<feature type="chain" id="PRO_0000458167" description="Holothin acyltransferase">
    <location>
        <begin position="1"/>
        <end position="294"/>
    </location>
</feature>
<feature type="domain" description="N-acetyltransferase" evidence="1">
    <location>
        <begin position="17"/>
        <end position="146"/>
    </location>
</feature>
<organism>
    <name type="scientific">Pseudoalteromonas sp. (strain SANK 73390)</name>
    <dbReference type="NCBI Taxonomy" id="747457"/>
    <lineage>
        <taxon>Bacteria</taxon>
        <taxon>Pseudomonadati</taxon>
        <taxon>Pseudomonadota</taxon>
        <taxon>Gammaproteobacteria</taxon>
        <taxon>Alteromonadales</taxon>
        <taxon>Pseudoalteromonadaceae</taxon>
        <taxon>Pseudoalteromonas</taxon>
    </lineage>
</organism>
<comment type="function">
    <text evidence="2">Acyltransferase that catalyzes the formation of pseudomonic acid C-holothin (PAC-holothin), a thiomarinol analog, from pseudomonoyl-CoA C (PAC-CoA) and holothin (PubMed:25726835). Accepts linear CoA substrates of different lengths, including propionyl-, hexanoyl-, octanoyl-, oleoyl- and dodecanoyl-CoA, readily converting all into the corresponding acyl-holothin adducts (PubMed:25726835). In vivo, is probably involved in the biosynthesis of thiomarinol, a naturally occurring double-headed antibiotic (PubMed:25726835).</text>
</comment>
<comment type="catalytic activity">
    <reaction evidence="5">
        <text>marinoloyl-CoA C + holothin = thiomarinol C + CoA</text>
        <dbReference type="Rhea" id="RHEA:75895"/>
        <dbReference type="ChEBI" id="CHEBI:57287"/>
        <dbReference type="ChEBI" id="CHEBI:66222"/>
        <dbReference type="ChEBI" id="CHEBI:142976"/>
        <dbReference type="ChEBI" id="CHEBI:194488"/>
    </reaction>
    <physiologicalReaction direction="left-to-right" evidence="5">
        <dbReference type="Rhea" id="RHEA:75896"/>
    </physiologicalReaction>
</comment>
<comment type="catalytic activity">
    <reaction evidence="2">
        <text>pseudomonoyl-CoA C + holothin = pseudomonic acid C--holothin + CoA</text>
        <dbReference type="Rhea" id="RHEA:75891"/>
        <dbReference type="ChEBI" id="CHEBI:57287"/>
        <dbReference type="ChEBI" id="CHEBI:142977"/>
        <dbReference type="ChEBI" id="CHEBI:194488"/>
        <dbReference type="ChEBI" id="CHEBI:194489"/>
    </reaction>
</comment>
<comment type="pathway">
    <text evidence="2">Antibiotic biosynthesis.</text>
</comment>
<reference key="1">
    <citation type="journal article" date="2011" name="PLoS ONE">
        <title>A natural plasmid uniquely encodes two biosynthetic pathways creating a potent anti-MRSA antibiotic.</title>
        <authorList>
            <person name="Fukuda D."/>
            <person name="Haines A.S."/>
            <person name="Song Z."/>
            <person name="Murphy A."/>
            <person name="Hothersall J."/>
            <person name="Stephens E."/>
            <person name="Gurney R."/>
            <person name="Cox R."/>
            <person name="Crosby J."/>
            <person name="Willis C."/>
            <person name="Simpson T.J."/>
            <person name="Thomas C.M."/>
        </authorList>
    </citation>
    <scope>NUCLEOTIDE SEQUENCE [LARGE SCALE GENOMIC DNA]</scope>
    <source>
        <strain>SANK 73390</strain>
        <plasmid>pTML1</plasmid>
    </source>
</reference>
<reference key="2">
    <citation type="journal article" date="2015" name="Angew. Chem. Int. Ed.">
        <title>Enzymatic basis of 'hybridity' in thiomarinol biosynthesis.</title>
        <authorList>
            <person name="Dunn Z.D."/>
            <person name="Wever W.J."/>
            <person name="Economou N.J."/>
            <person name="Bowers A.A."/>
            <person name="Li B."/>
        </authorList>
    </citation>
    <scope>FUNCTION</scope>
    <scope>CATALYTIC ACTIVITY</scope>
    <scope>PATHWAY</scope>
    <source>
        <strain>SANK 73390</strain>
    </source>
</reference>
<protein>
    <recommendedName>
        <fullName evidence="4">Holothin acyltransferase</fullName>
        <ecNumber evidence="1">2.3.1.-</ecNumber>
    </recommendedName>
</protein>
<evidence type="ECO:0000255" key="1">
    <source>
        <dbReference type="PROSITE-ProRule" id="PRU00532"/>
    </source>
</evidence>
<evidence type="ECO:0000269" key="2">
    <source>
    </source>
</evidence>
<evidence type="ECO:0000303" key="3">
    <source>
    </source>
</evidence>
<evidence type="ECO:0000305" key="4"/>
<evidence type="ECO:0000305" key="5">
    <source>
    </source>
</evidence>
<evidence type="ECO:0000312" key="6">
    <source>
        <dbReference type="EMBL" id="CBK62750.1"/>
    </source>
</evidence>
<geneLocation type="plasmid" evidence="6">
    <name>pTML1</name>
</geneLocation>
<accession>F8J3H2</accession>